<feature type="chain" id="PRO_0000342201" description="Probable CDP-diacylglycerol--glycerol-3-phosphate 3-phosphatidyltransferase">
    <location>
        <begin position="1"/>
        <end position="581"/>
    </location>
</feature>
<feature type="domain" description="PLD phosphodiesterase 1" evidence="3">
    <location>
        <begin position="248"/>
        <end position="274"/>
    </location>
</feature>
<feature type="domain" description="PLD phosphodiesterase 2" evidence="3">
    <location>
        <begin position="487"/>
        <end position="520"/>
    </location>
</feature>
<feature type="region of interest" description="Disordered" evidence="4">
    <location>
        <begin position="27"/>
        <end position="65"/>
    </location>
</feature>
<feature type="compositionally biased region" description="Low complexity" evidence="4">
    <location>
        <begin position="44"/>
        <end position="65"/>
    </location>
</feature>
<feature type="active site" evidence="3">
    <location>
        <position position="253"/>
    </location>
</feature>
<feature type="active site" evidence="3">
    <location>
        <position position="255"/>
    </location>
</feature>
<feature type="active site" evidence="3">
    <location>
        <position position="260"/>
    </location>
</feature>
<feature type="binding site" evidence="2">
    <location>
        <begin position="160"/>
        <end position="167"/>
    </location>
    <ligand>
        <name>ATP</name>
        <dbReference type="ChEBI" id="CHEBI:30616"/>
    </ligand>
</feature>
<dbReference type="EC" id="2.7.8.5"/>
<dbReference type="EMBL" id="AAFI02000019">
    <property type="protein sequence ID" value="EAL69020.2"/>
    <property type="molecule type" value="Genomic_DNA"/>
</dbReference>
<dbReference type="RefSeq" id="XP_642872.2">
    <property type="nucleotide sequence ID" value="XM_637780.2"/>
</dbReference>
<dbReference type="SMR" id="Q7KWX2"/>
<dbReference type="FunCoup" id="Q7KWX2">
    <property type="interactions" value="511"/>
</dbReference>
<dbReference type="STRING" id="44689.Q7KWX2"/>
<dbReference type="PaxDb" id="44689-DDB0237934"/>
<dbReference type="EnsemblProtists" id="EAL69020">
    <property type="protein sequence ID" value="EAL69020"/>
    <property type="gene ID" value="DDB_G0277037"/>
</dbReference>
<dbReference type="GeneID" id="8620738"/>
<dbReference type="KEGG" id="ddi:DDB_G0277037"/>
<dbReference type="dictyBase" id="DDB_G0277037">
    <property type="gene designation" value="pgs1"/>
</dbReference>
<dbReference type="VEuPathDB" id="AmoebaDB:DDB_G0277037"/>
<dbReference type="eggNOG" id="KOG3964">
    <property type="taxonomic scope" value="Eukaryota"/>
</dbReference>
<dbReference type="HOGENOM" id="CLU_030471_1_1_1"/>
<dbReference type="InParanoid" id="Q7KWX2"/>
<dbReference type="OMA" id="HKCLAQC"/>
<dbReference type="PhylomeDB" id="Q7KWX2"/>
<dbReference type="UniPathway" id="UPA00084">
    <property type="reaction ID" value="UER00503"/>
</dbReference>
<dbReference type="PRO" id="PR:Q7KWX2"/>
<dbReference type="Proteomes" id="UP000002195">
    <property type="component" value="Chromosome 2"/>
</dbReference>
<dbReference type="GO" id="GO:0005739">
    <property type="term" value="C:mitochondrion"/>
    <property type="evidence" value="ECO:0000250"/>
    <property type="project" value="dictyBase"/>
</dbReference>
<dbReference type="GO" id="GO:0005524">
    <property type="term" value="F:ATP binding"/>
    <property type="evidence" value="ECO:0007669"/>
    <property type="project" value="UniProtKB-KW"/>
</dbReference>
<dbReference type="GO" id="GO:0008444">
    <property type="term" value="F:CDP-diacylglycerol-glycerol-3-phosphate 3-phosphatidyltransferase activity"/>
    <property type="evidence" value="ECO:0000250"/>
    <property type="project" value="dictyBase"/>
</dbReference>
<dbReference type="GO" id="GO:0032049">
    <property type="term" value="P:cardiolipin biosynthetic process"/>
    <property type="evidence" value="ECO:0000318"/>
    <property type="project" value="GO_Central"/>
</dbReference>
<dbReference type="GO" id="GO:0008654">
    <property type="term" value="P:phospholipid biosynthetic process"/>
    <property type="evidence" value="ECO:0000250"/>
    <property type="project" value="dictyBase"/>
</dbReference>
<dbReference type="CDD" id="cd09135">
    <property type="entry name" value="PLDc_PGS1_euk_1"/>
    <property type="match status" value="1"/>
</dbReference>
<dbReference type="CDD" id="cd09137">
    <property type="entry name" value="PLDc_PGS1_euk_2"/>
    <property type="match status" value="1"/>
</dbReference>
<dbReference type="FunFam" id="3.30.870.10:FF:000044">
    <property type="entry name" value="CDP-diacylglycerol--glycerol-3-phosphate 3-phosphatidyltransferase"/>
    <property type="match status" value="1"/>
</dbReference>
<dbReference type="Gene3D" id="3.30.870.10">
    <property type="entry name" value="Endonuclease Chain A"/>
    <property type="match status" value="2"/>
</dbReference>
<dbReference type="InterPro" id="IPR016270">
    <property type="entry name" value="PGS1"/>
</dbReference>
<dbReference type="InterPro" id="IPR001736">
    <property type="entry name" value="PLipase_D/transphosphatidylase"/>
</dbReference>
<dbReference type="PANTHER" id="PTHR12586:SF1">
    <property type="entry name" value="CDP-DIACYLGLYCEROL--GLYCEROL-3-PHOSPHATE 3-PHOSPHATIDYLTRANSFERASE, MITOCHONDRIAL"/>
    <property type="match status" value="1"/>
</dbReference>
<dbReference type="PANTHER" id="PTHR12586">
    <property type="entry name" value="CDP-DIACYLGLYCEROL--SERINE O-PHOSPHATIDYLTRANSFERASE"/>
    <property type="match status" value="1"/>
</dbReference>
<dbReference type="SMART" id="SM00155">
    <property type="entry name" value="PLDc"/>
    <property type="match status" value="2"/>
</dbReference>
<dbReference type="SUPFAM" id="SSF56024">
    <property type="entry name" value="Phospholipase D/nuclease"/>
    <property type="match status" value="1"/>
</dbReference>
<dbReference type="PROSITE" id="PS50035">
    <property type="entry name" value="PLD"/>
    <property type="match status" value="1"/>
</dbReference>
<reference key="1">
    <citation type="journal article" date="2002" name="Nature">
        <title>Sequence and analysis of chromosome 2 of Dictyostelium discoideum.</title>
        <authorList>
            <person name="Gloeckner G."/>
            <person name="Eichinger L."/>
            <person name="Szafranski K."/>
            <person name="Pachebat J.A."/>
            <person name="Bankier A.T."/>
            <person name="Dear P.H."/>
            <person name="Lehmann R."/>
            <person name="Baumgart C."/>
            <person name="Parra G."/>
            <person name="Abril J.F."/>
            <person name="Guigo R."/>
            <person name="Kumpf K."/>
            <person name="Tunggal B."/>
            <person name="Cox E.C."/>
            <person name="Quail M.A."/>
            <person name="Platzer M."/>
            <person name="Rosenthal A."/>
            <person name="Noegel A.A."/>
        </authorList>
    </citation>
    <scope>NUCLEOTIDE SEQUENCE [LARGE SCALE GENOMIC DNA]</scope>
    <source>
        <strain>AX4</strain>
    </source>
</reference>
<reference key="2">
    <citation type="journal article" date="2005" name="Nature">
        <title>The genome of the social amoeba Dictyostelium discoideum.</title>
        <authorList>
            <person name="Eichinger L."/>
            <person name="Pachebat J.A."/>
            <person name="Gloeckner G."/>
            <person name="Rajandream M.A."/>
            <person name="Sucgang R."/>
            <person name="Berriman M."/>
            <person name="Song J."/>
            <person name="Olsen R."/>
            <person name="Szafranski K."/>
            <person name="Xu Q."/>
            <person name="Tunggal B."/>
            <person name="Kummerfeld S."/>
            <person name="Madera M."/>
            <person name="Konfortov B.A."/>
            <person name="Rivero F."/>
            <person name="Bankier A.T."/>
            <person name="Lehmann R."/>
            <person name="Hamlin N."/>
            <person name="Davies R."/>
            <person name="Gaudet P."/>
            <person name="Fey P."/>
            <person name="Pilcher K."/>
            <person name="Chen G."/>
            <person name="Saunders D."/>
            <person name="Sodergren E.J."/>
            <person name="Davis P."/>
            <person name="Kerhornou A."/>
            <person name="Nie X."/>
            <person name="Hall N."/>
            <person name="Anjard C."/>
            <person name="Hemphill L."/>
            <person name="Bason N."/>
            <person name="Farbrother P."/>
            <person name="Desany B."/>
            <person name="Just E."/>
            <person name="Morio T."/>
            <person name="Rost R."/>
            <person name="Churcher C.M."/>
            <person name="Cooper J."/>
            <person name="Haydock S."/>
            <person name="van Driessche N."/>
            <person name="Cronin A."/>
            <person name="Goodhead I."/>
            <person name="Muzny D.M."/>
            <person name="Mourier T."/>
            <person name="Pain A."/>
            <person name="Lu M."/>
            <person name="Harper D."/>
            <person name="Lindsay R."/>
            <person name="Hauser H."/>
            <person name="James K.D."/>
            <person name="Quiles M."/>
            <person name="Madan Babu M."/>
            <person name="Saito T."/>
            <person name="Buchrieser C."/>
            <person name="Wardroper A."/>
            <person name="Felder M."/>
            <person name="Thangavelu M."/>
            <person name="Johnson D."/>
            <person name="Knights A."/>
            <person name="Loulseged H."/>
            <person name="Mungall K.L."/>
            <person name="Oliver K."/>
            <person name="Price C."/>
            <person name="Quail M.A."/>
            <person name="Urushihara H."/>
            <person name="Hernandez J."/>
            <person name="Rabbinowitsch E."/>
            <person name="Steffen D."/>
            <person name="Sanders M."/>
            <person name="Ma J."/>
            <person name="Kohara Y."/>
            <person name="Sharp S."/>
            <person name="Simmonds M.N."/>
            <person name="Spiegler S."/>
            <person name="Tivey A."/>
            <person name="Sugano S."/>
            <person name="White B."/>
            <person name="Walker D."/>
            <person name="Woodward J.R."/>
            <person name="Winckler T."/>
            <person name="Tanaka Y."/>
            <person name="Shaulsky G."/>
            <person name="Schleicher M."/>
            <person name="Weinstock G.M."/>
            <person name="Rosenthal A."/>
            <person name="Cox E.C."/>
            <person name="Chisholm R.L."/>
            <person name="Gibbs R.A."/>
            <person name="Loomis W.F."/>
            <person name="Platzer M."/>
            <person name="Kay R.R."/>
            <person name="Williams J.G."/>
            <person name="Dear P.H."/>
            <person name="Noegel A.A."/>
            <person name="Barrell B.G."/>
            <person name="Kuspa A."/>
        </authorList>
    </citation>
    <scope>NUCLEOTIDE SEQUENCE [LARGE SCALE GENOMIC DNA]</scope>
    <source>
        <strain>AX4</strain>
    </source>
</reference>
<name>PGPS1_DICDI</name>
<organism>
    <name type="scientific">Dictyostelium discoideum</name>
    <name type="common">Social amoeba</name>
    <dbReference type="NCBI Taxonomy" id="44689"/>
    <lineage>
        <taxon>Eukaryota</taxon>
        <taxon>Amoebozoa</taxon>
        <taxon>Evosea</taxon>
        <taxon>Eumycetozoa</taxon>
        <taxon>Dictyostelia</taxon>
        <taxon>Dictyosteliales</taxon>
        <taxon>Dictyosteliaceae</taxon>
        <taxon>Dictyostelium</taxon>
    </lineage>
</organism>
<accession>Q7KWX2</accession>
<accession>Q550R0</accession>
<proteinExistence type="inferred from homology"/>
<protein>
    <recommendedName>
        <fullName>Probable CDP-diacylglycerol--glycerol-3-phosphate 3-phosphatidyltransferase</fullName>
        <ecNumber>2.7.8.5</ecNumber>
    </recommendedName>
    <alternativeName>
        <fullName>Phosphatidylglycerophosphate synthase 1</fullName>
        <shortName>PGP synthase 1</shortName>
    </alternativeName>
</protein>
<comment type="function">
    <text evidence="1">Functions in the biosynthesis of the anionic phospholipids phosphatidylglycerol and cardiolipin.</text>
</comment>
<comment type="catalytic activity">
    <reaction>
        <text>a CDP-1,2-diacyl-sn-glycerol + sn-glycerol 3-phosphate = a 1,2-diacyl-sn-glycero-3-phospho-(1'-sn-glycero-3'-phosphate) + CMP + H(+)</text>
        <dbReference type="Rhea" id="RHEA:12593"/>
        <dbReference type="ChEBI" id="CHEBI:15378"/>
        <dbReference type="ChEBI" id="CHEBI:57597"/>
        <dbReference type="ChEBI" id="CHEBI:58332"/>
        <dbReference type="ChEBI" id="CHEBI:60110"/>
        <dbReference type="ChEBI" id="CHEBI:60377"/>
        <dbReference type="EC" id="2.7.8.5"/>
    </reaction>
</comment>
<comment type="pathway">
    <text>Phospholipid metabolism; phosphatidylglycerol biosynthesis; phosphatidylglycerol from CDP-diacylglycerol: step 1/2.</text>
</comment>
<comment type="similarity">
    <text evidence="5">Belongs to the CDP-alcohol phosphatidyltransferase class-II family.</text>
</comment>
<keyword id="KW-0067">ATP-binding</keyword>
<keyword id="KW-0444">Lipid biosynthesis</keyword>
<keyword id="KW-0443">Lipid metabolism</keyword>
<keyword id="KW-0547">Nucleotide-binding</keyword>
<keyword id="KW-0594">Phospholipid biosynthesis</keyword>
<keyword id="KW-1208">Phospholipid metabolism</keyword>
<keyword id="KW-1185">Reference proteome</keyword>
<keyword id="KW-0677">Repeat</keyword>
<keyword id="KW-0808">Transferase</keyword>
<evidence type="ECO:0000250" key="1"/>
<evidence type="ECO:0000255" key="2"/>
<evidence type="ECO:0000255" key="3">
    <source>
        <dbReference type="PROSITE-ProRule" id="PRU00153"/>
    </source>
</evidence>
<evidence type="ECO:0000256" key="4">
    <source>
        <dbReference type="SAM" id="MobiDB-lite"/>
    </source>
</evidence>
<evidence type="ECO:0000305" key="5"/>
<gene>
    <name type="primary">pgs1</name>
    <name type="ORF">DDB_G0277037</name>
</gene>
<sequence>MIKRALAPIVQPQRLFAALMVIGGGGRSATTTTTTTTKACGNGSSQSPPSTPLLSSKSSTITSNKKSAIPSSHLYIPKKSTLDSRQIGNYSREYSTSSSSSSKKSIFNDTYLNDLFWQLSSQGPAFEVNPNNIDFIQEPIDFYNHLIDGVKRSKKRITMASLYLGTSKQEIELVKEMKLAMERNKELKIHILLDGLRGTRIGLDKESSATILGELLSLYSDRVTISMYHTPDLNGILKKVLPPRINETIGVQHIKTYIFDDDLLLSGANLSKDYFTNRQDRYVLIRSTSTVSNYFNEIVEIIGSLSLHVDKDNRNQLLLSSGSIDPVTQSNEFKNLAYTKLSTLLKSHSYYPSNSNSNSSVDSPFDCNNINNGETTWIFPTIQMGPFNIRQDEVVTSHIFESVPNDSKFFITSPYFNLTENYLNLILTGKPKLDIITCSPQANGFYGSKGLSSAVPDCYAIIEKRFLQRVQDTDNGDRISVQEYIRDKWTYHAKGLWIQVKNQQHPSITLIGSPNFGSRSVEKDLEAQIILITQNKQLQQKMENEKNYLWTDTQNANLELFEKRKVSLMVRFLVYIFGNYL</sequence>